<protein>
    <recommendedName>
        <fullName evidence="1">Urease subunit gamma</fullName>
        <ecNumber evidence="1">3.5.1.5</ecNumber>
    </recommendedName>
    <alternativeName>
        <fullName evidence="1">Urea amidohydrolase subunit gamma</fullName>
    </alternativeName>
</protein>
<sequence>MELNPTEKDKLLIFTAGLVAERRKARGLKLNYPEAVAFISAALLEGARDGMTVSELMHFGTTLLKREDVMDGVPEMIAEVQVEATFPDGSKLVTVHQPIV</sequence>
<name>URE3_ACIB5</name>
<comment type="catalytic activity">
    <reaction evidence="1">
        <text>urea + 2 H2O + H(+) = hydrogencarbonate + 2 NH4(+)</text>
        <dbReference type="Rhea" id="RHEA:20557"/>
        <dbReference type="ChEBI" id="CHEBI:15377"/>
        <dbReference type="ChEBI" id="CHEBI:15378"/>
        <dbReference type="ChEBI" id="CHEBI:16199"/>
        <dbReference type="ChEBI" id="CHEBI:17544"/>
        <dbReference type="ChEBI" id="CHEBI:28938"/>
        <dbReference type="EC" id="3.5.1.5"/>
    </reaction>
</comment>
<comment type="pathway">
    <text evidence="1">Nitrogen metabolism; urea degradation; CO(2) and NH(3) from urea (urease route): step 1/1.</text>
</comment>
<comment type="subunit">
    <text evidence="1">Heterotrimer of UreA (gamma), UreB (beta) and UreC (alpha) subunits. Three heterotrimers associate to form the active enzyme.</text>
</comment>
<comment type="subcellular location">
    <subcellularLocation>
        <location evidence="1">Cytoplasm</location>
    </subcellularLocation>
</comment>
<comment type="similarity">
    <text evidence="1">Belongs to the urease gamma subunit family.</text>
</comment>
<organism>
    <name type="scientific">Acinetobacter baumannii (strain AB0057)</name>
    <dbReference type="NCBI Taxonomy" id="480119"/>
    <lineage>
        <taxon>Bacteria</taxon>
        <taxon>Pseudomonadati</taxon>
        <taxon>Pseudomonadota</taxon>
        <taxon>Gammaproteobacteria</taxon>
        <taxon>Moraxellales</taxon>
        <taxon>Moraxellaceae</taxon>
        <taxon>Acinetobacter</taxon>
        <taxon>Acinetobacter calcoaceticus/baumannii complex</taxon>
    </lineage>
</organism>
<dbReference type="EC" id="3.5.1.5" evidence="1"/>
<dbReference type="EMBL" id="CP001182">
    <property type="protein sequence ID" value="ACJ40877.1"/>
    <property type="molecule type" value="Genomic_DNA"/>
</dbReference>
<dbReference type="RefSeq" id="WP_000422460.1">
    <property type="nucleotide sequence ID" value="NC_011586.2"/>
</dbReference>
<dbReference type="SMR" id="B7I8T3"/>
<dbReference type="GeneID" id="92892975"/>
<dbReference type="KEGG" id="abn:AB57_1092"/>
<dbReference type="HOGENOM" id="CLU_145825_1_0_6"/>
<dbReference type="UniPathway" id="UPA00258">
    <property type="reaction ID" value="UER00370"/>
</dbReference>
<dbReference type="Proteomes" id="UP000007094">
    <property type="component" value="Chromosome"/>
</dbReference>
<dbReference type="GO" id="GO:0005737">
    <property type="term" value="C:cytoplasm"/>
    <property type="evidence" value="ECO:0007669"/>
    <property type="project" value="UniProtKB-SubCell"/>
</dbReference>
<dbReference type="GO" id="GO:0016151">
    <property type="term" value="F:nickel cation binding"/>
    <property type="evidence" value="ECO:0007669"/>
    <property type="project" value="InterPro"/>
</dbReference>
<dbReference type="GO" id="GO:0009039">
    <property type="term" value="F:urease activity"/>
    <property type="evidence" value="ECO:0007669"/>
    <property type="project" value="UniProtKB-UniRule"/>
</dbReference>
<dbReference type="GO" id="GO:0043419">
    <property type="term" value="P:urea catabolic process"/>
    <property type="evidence" value="ECO:0007669"/>
    <property type="project" value="UniProtKB-UniRule"/>
</dbReference>
<dbReference type="CDD" id="cd00390">
    <property type="entry name" value="Urease_gamma"/>
    <property type="match status" value="1"/>
</dbReference>
<dbReference type="Gene3D" id="3.30.280.10">
    <property type="entry name" value="Urease, gamma-like subunit"/>
    <property type="match status" value="1"/>
</dbReference>
<dbReference type="HAMAP" id="MF_00739">
    <property type="entry name" value="Urease_gamma"/>
    <property type="match status" value="1"/>
</dbReference>
<dbReference type="InterPro" id="IPR012010">
    <property type="entry name" value="Urease_gamma"/>
</dbReference>
<dbReference type="InterPro" id="IPR002026">
    <property type="entry name" value="Urease_gamma/gamma-beta_su"/>
</dbReference>
<dbReference type="InterPro" id="IPR036463">
    <property type="entry name" value="Urease_gamma_sf"/>
</dbReference>
<dbReference type="InterPro" id="IPR050069">
    <property type="entry name" value="Urease_subunit"/>
</dbReference>
<dbReference type="NCBIfam" id="NF009712">
    <property type="entry name" value="PRK13241.1"/>
    <property type="match status" value="1"/>
</dbReference>
<dbReference type="NCBIfam" id="TIGR00193">
    <property type="entry name" value="urease_gam"/>
    <property type="match status" value="1"/>
</dbReference>
<dbReference type="PANTHER" id="PTHR33569">
    <property type="entry name" value="UREASE"/>
    <property type="match status" value="1"/>
</dbReference>
<dbReference type="PANTHER" id="PTHR33569:SF1">
    <property type="entry name" value="UREASE"/>
    <property type="match status" value="1"/>
</dbReference>
<dbReference type="Pfam" id="PF00547">
    <property type="entry name" value="Urease_gamma"/>
    <property type="match status" value="1"/>
</dbReference>
<dbReference type="PIRSF" id="PIRSF001223">
    <property type="entry name" value="Urease_gamma"/>
    <property type="match status" value="1"/>
</dbReference>
<dbReference type="SUPFAM" id="SSF54111">
    <property type="entry name" value="Urease, gamma-subunit"/>
    <property type="match status" value="1"/>
</dbReference>
<feature type="chain" id="PRO_1000199840" description="Urease subunit gamma">
    <location>
        <begin position="1"/>
        <end position="100"/>
    </location>
</feature>
<accession>B7I8T3</accession>
<gene>
    <name evidence="1" type="primary">ureA</name>
    <name type="ordered locus">AB57_1092</name>
</gene>
<proteinExistence type="inferred from homology"/>
<keyword id="KW-0963">Cytoplasm</keyword>
<keyword id="KW-0378">Hydrolase</keyword>
<evidence type="ECO:0000255" key="1">
    <source>
        <dbReference type="HAMAP-Rule" id="MF_00739"/>
    </source>
</evidence>
<reference key="1">
    <citation type="journal article" date="2008" name="J. Bacteriol.">
        <title>Comparative genome sequence analysis of multidrug-resistant Acinetobacter baumannii.</title>
        <authorList>
            <person name="Adams M.D."/>
            <person name="Goglin K."/>
            <person name="Molyneaux N."/>
            <person name="Hujer K.M."/>
            <person name="Lavender H."/>
            <person name="Jamison J.J."/>
            <person name="MacDonald I.J."/>
            <person name="Martin K.M."/>
            <person name="Russo T."/>
            <person name="Campagnari A.A."/>
            <person name="Hujer A.M."/>
            <person name="Bonomo R.A."/>
            <person name="Gill S.R."/>
        </authorList>
    </citation>
    <scope>NUCLEOTIDE SEQUENCE [LARGE SCALE GENOMIC DNA]</scope>
    <source>
        <strain>AB0057</strain>
    </source>
</reference>